<name>METXS_BURM7</name>
<feature type="chain" id="PRO_1000021870" description="Homoserine O-succinyltransferase">
    <location>
        <begin position="1"/>
        <end position="381"/>
    </location>
</feature>
<feature type="domain" description="AB hydrolase-1" evidence="1">
    <location>
        <begin position="45"/>
        <end position="360"/>
    </location>
</feature>
<feature type="active site" description="Nucleophile" evidence="1">
    <location>
        <position position="151"/>
    </location>
</feature>
<feature type="active site" evidence="1">
    <location>
        <position position="321"/>
    </location>
</feature>
<feature type="active site" evidence="1">
    <location>
        <position position="354"/>
    </location>
</feature>
<feature type="binding site" evidence="1">
    <location>
        <position position="221"/>
    </location>
    <ligand>
        <name>substrate</name>
    </ligand>
</feature>
<feature type="binding site" evidence="1">
    <location>
        <position position="355"/>
    </location>
    <ligand>
        <name>substrate</name>
    </ligand>
</feature>
<feature type="site" description="Important for acyl-CoA specificity" evidence="1">
    <location>
        <position position="323"/>
    </location>
</feature>
<gene>
    <name evidence="1" type="primary">metXS</name>
    <name type="ordered locus">BMA10247_3441</name>
</gene>
<evidence type="ECO:0000255" key="1">
    <source>
        <dbReference type="HAMAP-Rule" id="MF_00296"/>
    </source>
</evidence>
<accession>A3MRS1</accession>
<organism>
    <name type="scientific">Burkholderia mallei (strain NCTC 10247)</name>
    <dbReference type="NCBI Taxonomy" id="320389"/>
    <lineage>
        <taxon>Bacteria</taxon>
        <taxon>Pseudomonadati</taxon>
        <taxon>Pseudomonadota</taxon>
        <taxon>Betaproteobacteria</taxon>
        <taxon>Burkholderiales</taxon>
        <taxon>Burkholderiaceae</taxon>
        <taxon>Burkholderia</taxon>
        <taxon>pseudomallei group</taxon>
    </lineage>
</organism>
<protein>
    <recommendedName>
        <fullName evidence="1">Homoserine O-succinyltransferase</fullName>
        <shortName evidence="1">HST</shortName>
        <ecNumber evidence="1">2.3.1.46</ecNumber>
    </recommendedName>
    <alternativeName>
        <fullName evidence="1">Homoserine transsuccinylase</fullName>
        <shortName evidence="1">HTS</shortName>
    </alternativeName>
</protein>
<proteinExistence type="inferred from homology"/>
<sequence>MESIGVVAPHTMHFAEPLRLQSGSVLGNYQLVVETYGELNAARSNAVLVCHALNASHHVAGVYADDPRSTGWWDNMVGPGKPLDTNRFFVIGVNNLGSCFGSTGPMSIDPATGTPYGARFPVVTVEDWVHAQARVADAFGIERFAAVMGGSLGGMQALAWSLLYPERVAHCIDIASTPKLSAQNIAFNEVARSAILSDPDFHGGDYYAHGVKPRRGLRVARMIGHITYLSDDDMAEKFGRALRRADGALDAYNFNFDVEFEVESYLRYQGDKFADYFDANTYLLITRALDYFDPAKAFNGDLSAALAHTKAKYLIASFMTDWRFAPARSREIVKALLDNRRSVSYAEIDAPHGHDAFLLDDARYHNLVRAYYERIAEEVGA</sequence>
<reference key="1">
    <citation type="journal article" date="2010" name="Genome Biol. Evol.">
        <title>Continuing evolution of Burkholderia mallei through genome reduction and large-scale rearrangements.</title>
        <authorList>
            <person name="Losada L."/>
            <person name="Ronning C.M."/>
            <person name="DeShazer D."/>
            <person name="Woods D."/>
            <person name="Fedorova N."/>
            <person name="Kim H.S."/>
            <person name="Shabalina S.A."/>
            <person name="Pearson T.R."/>
            <person name="Brinkac L."/>
            <person name="Tan P."/>
            <person name="Nandi T."/>
            <person name="Crabtree J."/>
            <person name="Badger J."/>
            <person name="Beckstrom-Sternberg S."/>
            <person name="Saqib M."/>
            <person name="Schutzer S.E."/>
            <person name="Keim P."/>
            <person name="Nierman W.C."/>
        </authorList>
    </citation>
    <scope>NUCLEOTIDE SEQUENCE [LARGE SCALE GENOMIC DNA]</scope>
    <source>
        <strain>NCTC 10247</strain>
    </source>
</reference>
<keyword id="KW-0012">Acyltransferase</keyword>
<keyword id="KW-0028">Amino-acid biosynthesis</keyword>
<keyword id="KW-0963">Cytoplasm</keyword>
<keyword id="KW-0486">Methionine biosynthesis</keyword>
<keyword id="KW-0808">Transferase</keyword>
<dbReference type="EC" id="2.3.1.46" evidence="1"/>
<dbReference type="EMBL" id="CP000548">
    <property type="protein sequence ID" value="ABO04958.1"/>
    <property type="molecule type" value="Genomic_DNA"/>
</dbReference>
<dbReference type="SMR" id="A3MRS1"/>
<dbReference type="ESTHER" id="burma-metx">
    <property type="family name" value="Homoserine_transacetylase"/>
</dbReference>
<dbReference type="KEGG" id="bmaz:BM44_3078"/>
<dbReference type="KEGG" id="bmn:BMA10247_3441"/>
<dbReference type="PATRIC" id="fig|320389.8.peg.3447"/>
<dbReference type="UniPathway" id="UPA00051">
    <property type="reaction ID" value="UER00075"/>
</dbReference>
<dbReference type="GO" id="GO:0005737">
    <property type="term" value="C:cytoplasm"/>
    <property type="evidence" value="ECO:0007669"/>
    <property type="project" value="UniProtKB-SubCell"/>
</dbReference>
<dbReference type="GO" id="GO:0004414">
    <property type="term" value="F:homoserine O-acetyltransferase activity"/>
    <property type="evidence" value="ECO:0007669"/>
    <property type="project" value="TreeGrafter"/>
</dbReference>
<dbReference type="GO" id="GO:0008899">
    <property type="term" value="F:homoserine O-succinyltransferase activity"/>
    <property type="evidence" value="ECO:0007669"/>
    <property type="project" value="UniProtKB-UniRule"/>
</dbReference>
<dbReference type="GO" id="GO:0009092">
    <property type="term" value="P:homoserine metabolic process"/>
    <property type="evidence" value="ECO:0007669"/>
    <property type="project" value="TreeGrafter"/>
</dbReference>
<dbReference type="GO" id="GO:0009086">
    <property type="term" value="P:methionine biosynthetic process"/>
    <property type="evidence" value="ECO:0007669"/>
    <property type="project" value="UniProtKB-UniRule"/>
</dbReference>
<dbReference type="FunFam" id="1.10.1740.110:FF:000001">
    <property type="entry name" value="Homoserine O-acetyltransferase"/>
    <property type="match status" value="1"/>
</dbReference>
<dbReference type="Gene3D" id="1.10.1740.110">
    <property type="match status" value="1"/>
</dbReference>
<dbReference type="Gene3D" id="3.40.50.1820">
    <property type="entry name" value="alpha/beta hydrolase"/>
    <property type="match status" value="1"/>
</dbReference>
<dbReference type="HAMAP" id="MF_00296">
    <property type="entry name" value="MetX_acyltransf"/>
    <property type="match status" value="1"/>
</dbReference>
<dbReference type="InterPro" id="IPR000073">
    <property type="entry name" value="AB_hydrolase_1"/>
</dbReference>
<dbReference type="InterPro" id="IPR029058">
    <property type="entry name" value="AB_hydrolase_fold"/>
</dbReference>
<dbReference type="InterPro" id="IPR008220">
    <property type="entry name" value="HAT_MetX-like"/>
</dbReference>
<dbReference type="NCBIfam" id="TIGR01392">
    <property type="entry name" value="homoserO_Ac_trn"/>
    <property type="match status" value="1"/>
</dbReference>
<dbReference type="NCBIfam" id="NF001209">
    <property type="entry name" value="PRK00175.1"/>
    <property type="match status" value="1"/>
</dbReference>
<dbReference type="PANTHER" id="PTHR32268">
    <property type="entry name" value="HOMOSERINE O-ACETYLTRANSFERASE"/>
    <property type="match status" value="1"/>
</dbReference>
<dbReference type="PANTHER" id="PTHR32268:SF11">
    <property type="entry name" value="HOMOSERINE O-ACETYLTRANSFERASE"/>
    <property type="match status" value="1"/>
</dbReference>
<dbReference type="Pfam" id="PF00561">
    <property type="entry name" value="Abhydrolase_1"/>
    <property type="match status" value="1"/>
</dbReference>
<dbReference type="PIRSF" id="PIRSF000443">
    <property type="entry name" value="Homoser_Ac_trans"/>
    <property type="match status" value="1"/>
</dbReference>
<dbReference type="SUPFAM" id="SSF53474">
    <property type="entry name" value="alpha/beta-Hydrolases"/>
    <property type="match status" value="1"/>
</dbReference>
<comment type="function">
    <text evidence="1">Transfers a succinyl group from succinyl-CoA to L-homoserine, forming succinyl-L-homoserine.</text>
</comment>
<comment type="catalytic activity">
    <reaction evidence="1">
        <text>L-homoserine + succinyl-CoA = O-succinyl-L-homoserine + CoA</text>
        <dbReference type="Rhea" id="RHEA:22008"/>
        <dbReference type="ChEBI" id="CHEBI:57287"/>
        <dbReference type="ChEBI" id="CHEBI:57292"/>
        <dbReference type="ChEBI" id="CHEBI:57476"/>
        <dbReference type="ChEBI" id="CHEBI:57661"/>
        <dbReference type="EC" id="2.3.1.46"/>
    </reaction>
</comment>
<comment type="pathway">
    <text evidence="1">Amino-acid biosynthesis; L-methionine biosynthesis via de novo pathway; O-succinyl-L-homoserine from L-homoserine: step 1/1.</text>
</comment>
<comment type="subunit">
    <text evidence="1">Homodimer.</text>
</comment>
<comment type="subcellular location">
    <subcellularLocation>
        <location evidence="1">Cytoplasm</location>
    </subcellularLocation>
</comment>
<comment type="similarity">
    <text evidence="1">Belongs to the AB hydrolase superfamily. MetX family.</text>
</comment>